<protein>
    <recommendedName>
        <fullName evidence="1 6">Cyclin-dependent kinase inhibitor 3</fullName>
        <ecNumber>3.1.3.16</ecNumber>
        <ecNumber>3.1.3.48</ecNumber>
    </recommendedName>
    <alternativeName>
        <fullName evidence="1">CDK2-associated dual-specificity phosphatase</fullName>
    </alternativeName>
    <alternativeName>
        <fullName evidence="1">Kinase-associated phosphatase</fullName>
    </alternativeName>
</protein>
<organism>
    <name type="scientific">Mus musculus</name>
    <name type="common">Mouse</name>
    <dbReference type="NCBI Taxonomy" id="10090"/>
    <lineage>
        <taxon>Eukaryota</taxon>
        <taxon>Metazoa</taxon>
        <taxon>Chordata</taxon>
        <taxon>Craniata</taxon>
        <taxon>Vertebrata</taxon>
        <taxon>Euteleostomi</taxon>
        <taxon>Mammalia</taxon>
        <taxon>Eutheria</taxon>
        <taxon>Euarchontoglires</taxon>
        <taxon>Glires</taxon>
        <taxon>Rodentia</taxon>
        <taxon>Myomorpha</taxon>
        <taxon>Muroidea</taxon>
        <taxon>Muridae</taxon>
        <taxon>Murinae</taxon>
        <taxon>Mus</taxon>
        <taxon>Mus</taxon>
    </lineage>
</organism>
<accession>Q810P3</accession>
<accession>Q9CWS3</accession>
<keyword id="KW-0131">Cell cycle</keyword>
<keyword id="KW-0963">Cytoplasm</keyword>
<keyword id="KW-0378">Hydrolase</keyword>
<keyword id="KW-0904">Protein phosphatase</keyword>
<keyword id="KW-1185">Reference proteome</keyword>
<proteinExistence type="evidence at transcript level"/>
<reference evidence="9" key="1">
    <citation type="journal article" date="2005" name="Science">
        <title>The transcriptional landscape of the mammalian genome.</title>
        <authorList>
            <person name="Carninci P."/>
            <person name="Kasukawa T."/>
            <person name="Katayama S."/>
            <person name="Gough J."/>
            <person name="Frith M.C."/>
            <person name="Maeda N."/>
            <person name="Oyama R."/>
            <person name="Ravasi T."/>
            <person name="Lenhard B."/>
            <person name="Wells C."/>
            <person name="Kodzius R."/>
            <person name="Shimokawa K."/>
            <person name="Bajic V.B."/>
            <person name="Brenner S.E."/>
            <person name="Batalov S."/>
            <person name="Forrest A.R."/>
            <person name="Zavolan M."/>
            <person name="Davis M.J."/>
            <person name="Wilming L.G."/>
            <person name="Aidinis V."/>
            <person name="Allen J.E."/>
            <person name="Ambesi-Impiombato A."/>
            <person name="Apweiler R."/>
            <person name="Aturaliya R.N."/>
            <person name="Bailey T.L."/>
            <person name="Bansal M."/>
            <person name="Baxter L."/>
            <person name="Beisel K.W."/>
            <person name="Bersano T."/>
            <person name="Bono H."/>
            <person name="Chalk A.M."/>
            <person name="Chiu K.P."/>
            <person name="Choudhary V."/>
            <person name="Christoffels A."/>
            <person name="Clutterbuck D.R."/>
            <person name="Crowe M.L."/>
            <person name="Dalla E."/>
            <person name="Dalrymple B.P."/>
            <person name="de Bono B."/>
            <person name="Della Gatta G."/>
            <person name="di Bernardo D."/>
            <person name="Down T."/>
            <person name="Engstrom P."/>
            <person name="Fagiolini M."/>
            <person name="Faulkner G."/>
            <person name="Fletcher C.F."/>
            <person name="Fukushima T."/>
            <person name="Furuno M."/>
            <person name="Futaki S."/>
            <person name="Gariboldi M."/>
            <person name="Georgii-Hemming P."/>
            <person name="Gingeras T.R."/>
            <person name="Gojobori T."/>
            <person name="Green R.E."/>
            <person name="Gustincich S."/>
            <person name="Harbers M."/>
            <person name="Hayashi Y."/>
            <person name="Hensch T.K."/>
            <person name="Hirokawa N."/>
            <person name="Hill D."/>
            <person name="Huminiecki L."/>
            <person name="Iacono M."/>
            <person name="Ikeo K."/>
            <person name="Iwama A."/>
            <person name="Ishikawa T."/>
            <person name="Jakt M."/>
            <person name="Kanapin A."/>
            <person name="Katoh M."/>
            <person name="Kawasawa Y."/>
            <person name="Kelso J."/>
            <person name="Kitamura H."/>
            <person name="Kitano H."/>
            <person name="Kollias G."/>
            <person name="Krishnan S.P."/>
            <person name="Kruger A."/>
            <person name="Kummerfeld S.K."/>
            <person name="Kurochkin I.V."/>
            <person name="Lareau L.F."/>
            <person name="Lazarevic D."/>
            <person name="Lipovich L."/>
            <person name="Liu J."/>
            <person name="Liuni S."/>
            <person name="McWilliam S."/>
            <person name="Madan Babu M."/>
            <person name="Madera M."/>
            <person name="Marchionni L."/>
            <person name="Matsuda H."/>
            <person name="Matsuzawa S."/>
            <person name="Miki H."/>
            <person name="Mignone F."/>
            <person name="Miyake S."/>
            <person name="Morris K."/>
            <person name="Mottagui-Tabar S."/>
            <person name="Mulder N."/>
            <person name="Nakano N."/>
            <person name="Nakauchi H."/>
            <person name="Ng P."/>
            <person name="Nilsson R."/>
            <person name="Nishiguchi S."/>
            <person name="Nishikawa S."/>
            <person name="Nori F."/>
            <person name="Ohara O."/>
            <person name="Okazaki Y."/>
            <person name="Orlando V."/>
            <person name="Pang K.C."/>
            <person name="Pavan W.J."/>
            <person name="Pavesi G."/>
            <person name="Pesole G."/>
            <person name="Petrovsky N."/>
            <person name="Piazza S."/>
            <person name="Reed J."/>
            <person name="Reid J.F."/>
            <person name="Ring B.Z."/>
            <person name="Ringwald M."/>
            <person name="Rost B."/>
            <person name="Ruan Y."/>
            <person name="Salzberg S.L."/>
            <person name="Sandelin A."/>
            <person name="Schneider C."/>
            <person name="Schoenbach C."/>
            <person name="Sekiguchi K."/>
            <person name="Semple C.A."/>
            <person name="Seno S."/>
            <person name="Sessa L."/>
            <person name="Sheng Y."/>
            <person name="Shibata Y."/>
            <person name="Shimada H."/>
            <person name="Shimada K."/>
            <person name="Silva D."/>
            <person name="Sinclair B."/>
            <person name="Sperling S."/>
            <person name="Stupka E."/>
            <person name="Sugiura K."/>
            <person name="Sultana R."/>
            <person name="Takenaka Y."/>
            <person name="Taki K."/>
            <person name="Tammoja K."/>
            <person name="Tan S.L."/>
            <person name="Tang S."/>
            <person name="Taylor M.S."/>
            <person name="Tegner J."/>
            <person name="Teichmann S.A."/>
            <person name="Ueda H.R."/>
            <person name="van Nimwegen E."/>
            <person name="Verardo R."/>
            <person name="Wei C.L."/>
            <person name="Yagi K."/>
            <person name="Yamanishi H."/>
            <person name="Zabarovsky E."/>
            <person name="Zhu S."/>
            <person name="Zimmer A."/>
            <person name="Hide W."/>
            <person name="Bult C."/>
            <person name="Grimmond S.M."/>
            <person name="Teasdale R.D."/>
            <person name="Liu E.T."/>
            <person name="Brusic V."/>
            <person name="Quackenbush J."/>
            <person name="Wahlestedt C."/>
            <person name="Mattick J.S."/>
            <person name="Hume D.A."/>
            <person name="Kai C."/>
            <person name="Sasaki D."/>
            <person name="Tomaru Y."/>
            <person name="Fukuda S."/>
            <person name="Kanamori-Katayama M."/>
            <person name="Suzuki M."/>
            <person name="Aoki J."/>
            <person name="Arakawa T."/>
            <person name="Iida J."/>
            <person name="Imamura K."/>
            <person name="Itoh M."/>
            <person name="Kato T."/>
            <person name="Kawaji H."/>
            <person name="Kawagashira N."/>
            <person name="Kawashima T."/>
            <person name="Kojima M."/>
            <person name="Kondo S."/>
            <person name="Konno H."/>
            <person name="Nakano K."/>
            <person name="Ninomiya N."/>
            <person name="Nishio T."/>
            <person name="Okada M."/>
            <person name="Plessy C."/>
            <person name="Shibata K."/>
            <person name="Shiraki T."/>
            <person name="Suzuki S."/>
            <person name="Tagami M."/>
            <person name="Waki K."/>
            <person name="Watahiki A."/>
            <person name="Okamura-Oho Y."/>
            <person name="Suzuki H."/>
            <person name="Kawai J."/>
            <person name="Hayashizaki Y."/>
        </authorList>
    </citation>
    <scope>NUCLEOTIDE SEQUENCE [LARGE SCALE MRNA]</scope>
    <source>
        <strain evidence="7">C57BL/6J</strain>
        <strain evidence="9">DBA/2J</strain>
        <tissue evidence="7">Embryonic stem cell</tissue>
        <tissue evidence="8">Embryonic testis</tissue>
    </source>
</reference>
<reference evidence="6" key="2">
    <citation type="journal article" date="2004" name="Genome Res.">
        <title>The status, quality, and expansion of the NIH full-length cDNA project: the Mammalian Gene Collection (MGC).</title>
        <authorList>
            <consortium name="The MGC Project Team"/>
        </authorList>
    </citation>
    <scope>NUCLEOTIDE SEQUENCE [LARGE SCALE MRNA]</scope>
    <source>
        <tissue evidence="6">Testis</tissue>
    </source>
</reference>
<sequence length="211" mass="23793">MKPPISIQASEFDSSDEEPVDEEQTPIQISWLPLSRVNCSQFLGLCALPGCKFKDVRRNIQKDTEELKSYGIQDVFVFCTRGELSKYRVPNLLDLYQQYGIVTHHHPIPDGGTPDIGSCWEIMEELATCLKNNRKTLIHCYGGLGRSCLAACLLLYLSDSISPQQAIDSLRDVRGSGAIQTIKQYNYLHEFRDKLAAYLSSRDSLSRSVSR</sequence>
<name>CDKN3_MOUSE</name>
<evidence type="ECO:0000250" key="1">
    <source>
        <dbReference type="UniProtKB" id="Q16667"/>
    </source>
</evidence>
<evidence type="ECO:0000255" key="2"/>
<evidence type="ECO:0000255" key="3">
    <source>
        <dbReference type="PROSITE-ProRule" id="PRU00160"/>
    </source>
</evidence>
<evidence type="ECO:0000256" key="4">
    <source>
        <dbReference type="SAM" id="MobiDB-lite"/>
    </source>
</evidence>
<evidence type="ECO:0000305" key="5"/>
<evidence type="ECO:0000312" key="6">
    <source>
        <dbReference type="EMBL" id="AAH49694.1"/>
    </source>
</evidence>
<evidence type="ECO:0000312" key="7">
    <source>
        <dbReference type="EMBL" id="BAB26929.1"/>
    </source>
</evidence>
<evidence type="ECO:0000312" key="8">
    <source>
        <dbReference type="EMBL" id="BAC28238.1"/>
    </source>
</evidence>
<evidence type="ECO:0000312" key="9">
    <source>
        <dbReference type="EMBL" id="BAE27067.1"/>
    </source>
</evidence>
<evidence type="ECO:0000312" key="10">
    <source>
        <dbReference type="MGI" id="MGI:1919641"/>
    </source>
</evidence>
<comment type="function">
    <text evidence="1">May play a role in cell cycle regulation. Dual specificity phosphatase active toward substrates containing either phosphotyrosine or phosphoserine residues. Dephosphorylates CDK2 at 'Thr-160' in a cyclin-dependent manner (By similarity).</text>
</comment>
<comment type="catalytic activity">
    <reaction evidence="1">
        <text>O-phospho-L-tyrosyl-[protein] + H2O = L-tyrosyl-[protein] + phosphate</text>
        <dbReference type="Rhea" id="RHEA:10684"/>
        <dbReference type="Rhea" id="RHEA-COMP:10136"/>
        <dbReference type="Rhea" id="RHEA-COMP:20101"/>
        <dbReference type="ChEBI" id="CHEBI:15377"/>
        <dbReference type="ChEBI" id="CHEBI:43474"/>
        <dbReference type="ChEBI" id="CHEBI:46858"/>
        <dbReference type="ChEBI" id="CHEBI:61978"/>
        <dbReference type="EC" id="3.1.3.48"/>
    </reaction>
</comment>
<comment type="catalytic activity">
    <reaction>
        <text>O-phospho-L-seryl-[protein] + H2O = L-seryl-[protein] + phosphate</text>
        <dbReference type="Rhea" id="RHEA:20629"/>
        <dbReference type="Rhea" id="RHEA-COMP:9863"/>
        <dbReference type="Rhea" id="RHEA-COMP:11604"/>
        <dbReference type="ChEBI" id="CHEBI:15377"/>
        <dbReference type="ChEBI" id="CHEBI:29999"/>
        <dbReference type="ChEBI" id="CHEBI:43474"/>
        <dbReference type="ChEBI" id="CHEBI:83421"/>
        <dbReference type="EC" id="3.1.3.16"/>
    </reaction>
</comment>
<comment type="catalytic activity">
    <reaction>
        <text>O-phospho-L-threonyl-[protein] + H2O = L-threonyl-[protein] + phosphate</text>
        <dbReference type="Rhea" id="RHEA:47004"/>
        <dbReference type="Rhea" id="RHEA-COMP:11060"/>
        <dbReference type="Rhea" id="RHEA-COMP:11605"/>
        <dbReference type="ChEBI" id="CHEBI:15377"/>
        <dbReference type="ChEBI" id="CHEBI:30013"/>
        <dbReference type="ChEBI" id="CHEBI:43474"/>
        <dbReference type="ChEBI" id="CHEBI:61977"/>
        <dbReference type="EC" id="3.1.3.16"/>
    </reaction>
</comment>
<comment type="subunit">
    <text evidence="1">Interacts with cyclin-dependent kinases such as CDK1, CDK2 and CDK3. Does not interact with CDK4. Interacts (via C-terminus) with phosphorylated CDK2 (via C-terminal helix). Interacts with MS4A3 (via C-terminus); the interaction enhances CDKN3 enzymatic activity (By similarity).</text>
</comment>
<comment type="subcellular location">
    <subcellularLocation>
        <location evidence="1">Cytoplasm</location>
        <location evidence="1">Perinuclear region</location>
    </subcellularLocation>
</comment>
<comment type="similarity">
    <text evidence="2">Belongs to the protein-tyrosine phosphatase family.</text>
</comment>
<comment type="sequence caution" evidence="5">
    <conflict type="miscellaneous discrepancy">
        <sequence resource="EMBL-CDS" id="BAB26929"/>
    </conflict>
    <text>Probable cloning artifact.</text>
</comment>
<comment type="sequence caution" evidence="5">
    <conflict type="miscellaneous discrepancy">
        <sequence resource="EMBL-CDS" id="BAC28238"/>
    </conflict>
    <text>Probable cloning artifact.</text>
</comment>
<dbReference type="EC" id="3.1.3.16"/>
<dbReference type="EC" id="3.1.3.48"/>
<dbReference type="EMBL" id="AK010426">
    <property type="protein sequence ID" value="BAB26929.1"/>
    <property type="status" value="ALT_SEQ"/>
    <property type="molecule type" value="mRNA"/>
</dbReference>
<dbReference type="EMBL" id="AK033341">
    <property type="protein sequence ID" value="BAC28238.1"/>
    <property type="status" value="ALT_SEQ"/>
    <property type="molecule type" value="mRNA"/>
</dbReference>
<dbReference type="EMBL" id="AK146312">
    <property type="protein sequence ID" value="BAE27067.1"/>
    <property type="molecule type" value="mRNA"/>
</dbReference>
<dbReference type="EMBL" id="BC049694">
    <property type="protein sequence ID" value="AAH49694.1"/>
    <property type="molecule type" value="mRNA"/>
</dbReference>
<dbReference type="CCDS" id="CCDS49466.1"/>
<dbReference type="RefSeq" id="NP_082498.1">
    <property type="nucleotide sequence ID" value="NM_028222.2"/>
</dbReference>
<dbReference type="SMR" id="Q810P3"/>
<dbReference type="FunCoup" id="Q810P3">
    <property type="interactions" value="1129"/>
</dbReference>
<dbReference type="STRING" id="10090.ENSMUSP00000070575"/>
<dbReference type="GlyGen" id="Q810P3">
    <property type="glycosylation" value="1 site"/>
</dbReference>
<dbReference type="PhosphoSitePlus" id="Q810P3"/>
<dbReference type="PaxDb" id="10090-ENSMUSP00000070575"/>
<dbReference type="ProteomicsDB" id="281519"/>
<dbReference type="Antibodypedia" id="3940">
    <property type="antibodies" value="537 antibodies from 31 providers"/>
</dbReference>
<dbReference type="DNASU" id="72391"/>
<dbReference type="Ensembl" id="ENSMUST00000067426.6">
    <property type="protein sequence ID" value="ENSMUSP00000070575.5"/>
    <property type="gene ID" value="ENSMUSG00000037628.11"/>
</dbReference>
<dbReference type="GeneID" id="72391"/>
<dbReference type="KEGG" id="mmu:72391"/>
<dbReference type="UCSC" id="uc007the.2">
    <property type="organism name" value="mouse"/>
</dbReference>
<dbReference type="AGR" id="MGI:1919641"/>
<dbReference type="CTD" id="1033"/>
<dbReference type="MGI" id="MGI:1919641">
    <property type="gene designation" value="Cdkn3"/>
</dbReference>
<dbReference type="VEuPathDB" id="HostDB:ENSMUSG00000037628"/>
<dbReference type="eggNOG" id="KOG1720">
    <property type="taxonomic scope" value="Eukaryota"/>
</dbReference>
<dbReference type="GeneTree" id="ENSGT00390000004717"/>
<dbReference type="HOGENOM" id="CLU_047330_1_0_1"/>
<dbReference type="InParanoid" id="Q810P3"/>
<dbReference type="OMA" id="CRYKDIR"/>
<dbReference type="OrthoDB" id="19045at2759"/>
<dbReference type="PhylomeDB" id="Q810P3"/>
<dbReference type="TreeFam" id="TF101040"/>
<dbReference type="BioGRID-ORCS" id="72391">
    <property type="hits" value="0 hits in 81 CRISPR screens"/>
</dbReference>
<dbReference type="ChiTaRS" id="Cdkn3">
    <property type="organism name" value="mouse"/>
</dbReference>
<dbReference type="PRO" id="PR:Q810P3"/>
<dbReference type="Proteomes" id="UP000000589">
    <property type="component" value="Chromosome 14"/>
</dbReference>
<dbReference type="RNAct" id="Q810P3">
    <property type="molecule type" value="protein"/>
</dbReference>
<dbReference type="Bgee" id="ENSMUSG00000037628">
    <property type="expression patterns" value="Expressed in seminiferous tubule of testis and 162 other cell types or tissues"/>
</dbReference>
<dbReference type="ExpressionAtlas" id="Q810P3">
    <property type="expression patterns" value="baseline and differential"/>
</dbReference>
<dbReference type="GO" id="GO:0005829">
    <property type="term" value="C:cytosol"/>
    <property type="evidence" value="ECO:0007669"/>
    <property type="project" value="Ensembl"/>
</dbReference>
<dbReference type="GO" id="GO:0048471">
    <property type="term" value="C:perinuclear region of cytoplasm"/>
    <property type="evidence" value="ECO:0000250"/>
    <property type="project" value="UniProtKB"/>
</dbReference>
<dbReference type="GO" id="GO:0004722">
    <property type="term" value="F:protein serine/threonine phosphatase activity"/>
    <property type="evidence" value="ECO:0000266"/>
    <property type="project" value="MGI"/>
</dbReference>
<dbReference type="GO" id="GO:0004725">
    <property type="term" value="F:protein tyrosine phosphatase activity"/>
    <property type="evidence" value="ECO:0000266"/>
    <property type="project" value="MGI"/>
</dbReference>
<dbReference type="GO" id="GO:0006974">
    <property type="term" value="P:DNA damage response"/>
    <property type="evidence" value="ECO:0000266"/>
    <property type="project" value="MGI"/>
</dbReference>
<dbReference type="GO" id="GO:0051726">
    <property type="term" value="P:regulation of cell cycle"/>
    <property type="evidence" value="ECO:0000266"/>
    <property type="project" value="MGI"/>
</dbReference>
<dbReference type="CDD" id="cd14505">
    <property type="entry name" value="CDKN3-like"/>
    <property type="match status" value="1"/>
</dbReference>
<dbReference type="FunFam" id="3.90.190.10:FF:000046">
    <property type="entry name" value="Cyclin-dependent kinase inhibitor 3"/>
    <property type="match status" value="1"/>
</dbReference>
<dbReference type="Gene3D" id="3.90.190.10">
    <property type="entry name" value="Protein tyrosine phosphatase superfamily"/>
    <property type="match status" value="1"/>
</dbReference>
<dbReference type="InterPro" id="IPR008425">
    <property type="entry name" value="CDK_inhib_3"/>
</dbReference>
<dbReference type="InterPro" id="IPR022778">
    <property type="entry name" value="CDKN3"/>
</dbReference>
<dbReference type="InterPro" id="IPR029021">
    <property type="entry name" value="Prot-tyrosine_phosphatase-like"/>
</dbReference>
<dbReference type="InterPro" id="IPR050561">
    <property type="entry name" value="PTP"/>
</dbReference>
<dbReference type="InterPro" id="IPR003595">
    <property type="entry name" value="Tyr_Pase_cat"/>
</dbReference>
<dbReference type="InterPro" id="IPR000387">
    <property type="entry name" value="Tyr_Pase_dom"/>
</dbReference>
<dbReference type="InterPro" id="IPR020422">
    <property type="entry name" value="TYR_PHOSPHATASE_DUAL_dom"/>
</dbReference>
<dbReference type="PANTHER" id="PTHR23339">
    <property type="entry name" value="TYROSINE SPECIFIC PROTEIN PHOSPHATASE AND DUAL SPECIFICITY PROTEIN PHOSPHATASE"/>
    <property type="match status" value="1"/>
</dbReference>
<dbReference type="Pfam" id="PF05706">
    <property type="entry name" value="CDKN3"/>
    <property type="match status" value="1"/>
</dbReference>
<dbReference type="PIRSF" id="PIRSF037322">
    <property type="entry name" value="CDKN3"/>
    <property type="match status" value="1"/>
</dbReference>
<dbReference type="SMART" id="SM00404">
    <property type="entry name" value="PTPc_motif"/>
    <property type="match status" value="1"/>
</dbReference>
<dbReference type="SUPFAM" id="SSF52799">
    <property type="entry name" value="(Phosphotyrosine protein) phosphatases II"/>
    <property type="match status" value="1"/>
</dbReference>
<dbReference type="PROSITE" id="PS50056">
    <property type="entry name" value="TYR_PHOSPHATASE_2"/>
    <property type="match status" value="1"/>
</dbReference>
<dbReference type="PROSITE" id="PS50054">
    <property type="entry name" value="TYR_PHOSPHATASE_DUAL"/>
    <property type="match status" value="1"/>
</dbReference>
<feature type="chain" id="PRO_0000396637" description="Cyclin-dependent kinase inhibitor 3">
    <location>
        <begin position="1"/>
        <end position="211"/>
    </location>
</feature>
<feature type="domain" description="Tyrosine-protein phosphatase" evidence="3">
    <location>
        <begin position="32"/>
        <end position="200"/>
    </location>
</feature>
<feature type="region of interest" description="Interaction with CDK2" evidence="1">
    <location>
        <begin position="1"/>
        <end position="34"/>
    </location>
</feature>
<feature type="region of interest" description="Disordered" evidence="4">
    <location>
        <begin position="1"/>
        <end position="20"/>
    </location>
</feature>
<feature type="active site" description="Phosphocysteine intermediate" evidence="3">
    <location>
        <position position="140"/>
    </location>
</feature>
<gene>
    <name evidence="10" type="primary">Cdkn3</name>
    <name evidence="1" type="synonym">Kap</name>
</gene>